<comment type="function">
    <text evidence="1">One of two assembly initiator proteins, it binds directly to the 5'-end of the 23S rRNA, where it nucleates assembly of the 50S subunit.</text>
</comment>
<comment type="function">
    <text evidence="1">One of the proteins that surrounds the polypeptide exit tunnel on the outside of the subunit.</text>
</comment>
<comment type="subunit">
    <text evidence="1">Part of the 50S ribosomal subunit.</text>
</comment>
<comment type="similarity">
    <text evidence="1">Belongs to the universal ribosomal protein uL24 family.</text>
</comment>
<accession>A8GYY7</accession>
<sequence length="104" mass="11282">MAAKIRRQDEVIVLAGKDQGKRGKVSQVLPTGKLIVEGINLVKKHQKPNPQLGVAGGIVEQEAPIQASNVAIFNSATGKADRVGFRFEDGKKVRFFKSNSELVK</sequence>
<name>RL24_SHEPA</name>
<evidence type="ECO:0000255" key="1">
    <source>
        <dbReference type="HAMAP-Rule" id="MF_01326"/>
    </source>
</evidence>
<evidence type="ECO:0000305" key="2"/>
<proteinExistence type="inferred from homology"/>
<organism>
    <name type="scientific">Shewanella pealeana (strain ATCC 700345 / ANG-SQ1)</name>
    <dbReference type="NCBI Taxonomy" id="398579"/>
    <lineage>
        <taxon>Bacteria</taxon>
        <taxon>Pseudomonadati</taxon>
        <taxon>Pseudomonadota</taxon>
        <taxon>Gammaproteobacteria</taxon>
        <taxon>Alteromonadales</taxon>
        <taxon>Shewanellaceae</taxon>
        <taxon>Shewanella</taxon>
    </lineage>
</organism>
<reference key="1">
    <citation type="submission" date="2007-10" db="EMBL/GenBank/DDBJ databases">
        <title>Complete sequence of Shewanella pealeana ATCC 700345.</title>
        <authorList>
            <consortium name="US DOE Joint Genome Institute"/>
            <person name="Copeland A."/>
            <person name="Lucas S."/>
            <person name="Lapidus A."/>
            <person name="Barry K."/>
            <person name="Glavina del Rio T."/>
            <person name="Dalin E."/>
            <person name="Tice H."/>
            <person name="Pitluck S."/>
            <person name="Chertkov O."/>
            <person name="Brettin T."/>
            <person name="Bruce D."/>
            <person name="Detter J.C."/>
            <person name="Han C."/>
            <person name="Schmutz J."/>
            <person name="Larimer F."/>
            <person name="Land M."/>
            <person name="Hauser L."/>
            <person name="Kyrpides N."/>
            <person name="Kim E."/>
            <person name="Zhao J.-S.Z."/>
            <person name="Manno D."/>
            <person name="Hawari J."/>
            <person name="Richardson P."/>
        </authorList>
    </citation>
    <scope>NUCLEOTIDE SEQUENCE [LARGE SCALE GENOMIC DNA]</scope>
    <source>
        <strain>ATCC 700345 / ANG-SQ1</strain>
    </source>
</reference>
<dbReference type="EMBL" id="CP000851">
    <property type="protein sequence ID" value="ABV85524.1"/>
    <property type="molecule type" value="Genomic_DNA"/>
</dbReference>
<dbReference type="RefSeq" id="WP_012153465.1">
    <property type="nucleotide sequence ID" value="NC_009901.1"/>
</dbReference>
<dbReference type="SMR" id="A8GYY7"/>
<dbReference type="STRING" id="398579.Spea_0195"/>
<dbReference type="KEGG" id="spl:Spea_0195"/>
<dbReference type="eggNOG" id="COG0198">
    <property type="taxonomic scope" value="Bacteria"/>
</dbReference>
<dbReference type="HOGENOM" id="CLU_093315_2_2_6"/>
<dbReference type="OrthoDB" id="9807419at2"/>
<dbReference type="Proteomes" id="UP000002608">
    <property type="component" value="Chromosome"/>
</dbReference>
<dbReference type="GO" id="GO:1990904">
    <property type="term" value="C:ribonucleoprotein complex"/>
    <property type="evidence" value="ECO:0007669"/>
    <property type="project" value="UniProtKB-KW"/>
</dbReference>
<dbReference type="GO" id="GO:0005840">
    <property type="term" value="C:ribosome"/>
    <property type="evidence" value="ECO:0007669"/>
    <property type="project" value="UniProtKB-KW"/>
</dbReference>
<dbReference type="GO" id="GO:0019843">
    <property type="term" value="F:rRNA binding"/>
    <property type="evidence" value="ECO:0007669"/>
    <property type="project" value="UniProtKB-UniRule"/>
</dbReference>
<dbReference type="GO" id="GO:0003735">
    <property type="term" value="F:structural constituent of ribosome"/>
    <property type="evidence" value="ECO:0007669"/>
    <property type="project" value="InterPro"/>
</dbReference>
<dbReference type="GO" id="GO:0006412">
    <property type="term" value="P:translation"/>
    <property type="evidence" value="ECO:0007669"/>
    <property type="project" value="UniProtKB-UniRule"/>
</dbReference>
<dbReference type="CDD" id="cd06089">
    <property type="entry name" value="KOW_RPL26"/>
    <property type="match status" value="1"/>
</dbReference>
<dbReference type="FunFam" id="2.30.30.30:FF:000004">
    <property type="entry name" value="50S ribosomal protein L24"/>
    <property type="match status" value="1"/>
</dbReference>
<dbReference type="Gene3D" id="2.30.30.30">
    <property type="match status" value="1"/>
</dbReference>
<dbReference type="HAMAP" id="MF_01326_B">
    <property type="entry name" value="Ribosomal_uL24_B"/>
    <property type="match status" value="1"/>
</dbReference>
<dbReference type="InterPro" id="IPR005824">
    <property type="entry name" value="KOW"/>
</dbReference>
<dbReference type="InterPro" id="IPR014722">
    <property type="entry name" value="Rib_uL2_dom2"/>
</dbReference>
<dbReference type="InterPro" id="IPR003256">
    <property type="entry name" value="Ribosomal_uL24"/>
</dbReference>
<dbReference type="InterPro" id="IPR041988">
    <property type="entry name" value="Ribosomal_uL24_KOW"/>
</dbReference>
<dbReference type="InterPro" id="IPR008991">
    <property type="entry name" value="Translation_prot_SH3-like_sf"/>
</dbReference>
<dbReference type="NCBIfam" id="TIGR01079">
    <property type="entry name" value="rplX_bact"/>
    <property type="match status" value="1"/>
</dbReference>
<dbReference type="PANTHER" id="PTHR12903">
    <property type="entry name" value="MITOCHONDRIAL RIBOSOMAL PROTEIN L24"/>
    <property type="match status" value="1"/>
</dbReference>
<dbReference type="Pfam" id="PF00467">
    <property type="entry name" value="KOW"/>
    <property type="match status" value="1"/>
</dbReference>
<dbReference type="Pfam" id="PF17136">
    <property type="entry name" value="ribosomal_L24"/>
    <property type="match status" value="1"/>
</dbReference>
<dbReference type="SMART" id="SM00739">
    <property type="entry name" value="KOW"/>
    <property type="match status" value="1"/>
</dbReference>
<dbReference type="SUPFAM" id="SSF50104">
    <property type="entry name" value="Translation proteins SH3-like domain"/>
    <property type="match status" value="1"/>
</dbReference>
<keyword id="KW-1185">Reference proteome</keyword>
<keyword id="KW-0687">Ribonucleoprotein</keyword>
<keyword id="KW-0689">Ribosomal protein</keyword>
<keyword id="KW-0694">RNA-binding</keyword>
<keyword id="KW-0699">rRNA-binding</keyword>
<gene>
    <name evidence="1" type="primary">rplX</name>
    <name type="ordered locus">Spea_0195</name>
</gene>
<feature type="chain" id="PRO_1000086495" description="Large ribosomal subunit protein uL24">
    <location>
        <begin position="1"/>
        <end position="104"/>
    </location>
</feature>
<protein>
    <recommendedName>
        <fullName evidence="1">Large ribosomal subunit protein uL24</fullName>
    </recommendedName>
    <alternativeName>
        <fullName evidence="2">50S ribosomal protein L24</fullName>
    </alternativeName>
</protein>